<accession>Q20249</accession>
<gene>
    <name type="primary">sre-8</name>
    <name type="ORF">F40G12.1</name>
</gene>
<proteinExistence type="inferred from homology"/>
<organism>
    <name type="scientific">Caenorhabditis elegans</name>
    <dbReference type="NCBI Taxonomy" id="6239"/>
    <lineage>
        <taxon>Eukaryota</taxon>
        <taxon>Metazoa</taxon>
        <taxon>Ecdysozoa</taxon>
        <taxon>Nematoda</taxon>
        <taxon>Chromadorea</taxon>
        <taxon>Rhabditida</taxon>
        <taxon>Rhabditina</taxon>
        <taxon>Rhabditomorpha</taxon>
        <taxon>Rhabditoidea</taxon>
        <taxon>Rhabditidae</taxon>
        <taxon>Peloderinae</taxon>
        <taxon>Caenorhabditis</taxon>
    </lineage>
</organism>
<sequence length="341" mass="40187">MCSPSTSDVRFITFVNTTYIEAEGLEAIFDLLLKIEVGFLVFSWIEFLYLFYLFIFIRSMHFNLTFLFMNYGGQYFCSMLSRCIIVYQQLGNDPNNDLHNWILVANFARTVCLFIAMYILPIFMIERCLASFFVKNYEKSRKIWVSLMILSIFHPLVFASAIAYIQCWIPVVVHVISFFIVNIIGYIGIHICYSYNIKKHRKFYSPQCISRVTYGLSERFQLAENIKMCKVLKKVQISILFFNIGCCSILLMDHFQVKMMIIYWSYVCFNFFALVYGITVPIILYSALPEWQKETRRLLNLCIGRRNVGEEPKSTFGEQMIYNDHAIESNIYFTQFNKTTH</sequence>
<feature type="chain" id="PRO_0000104537" description="Serpentine receptor class epsilon-8">
    <location>
        <begin position="1"/>
        <end position="341"/>
    </location>
</feature>
<feature type="transmembrane region" description="Helical" evidence="1">
    <location>
        <begin position="37"/>
        <end position="57"/>
    </location>
</feature>
<feature type="transmembrane region" description="Helical" evidence="1">
    <location>
        <begin position="64"/>
        <end position="86"/>
    </location>
</feature>
<feature type="transmembrane region" description="Helical" evidence="1">
    <location>
        <begin position="101"/>
        <end position="123"/>
    </location>
</feature>
<feature type="transmembrane region" description="Helical" evidence="1">
    <location>
        <begin position="143"/>
        <end position="163"/>
    </location>
</feature>
<feature type="transmembrane region" description="Helical" evidence="1">
    <location>
        <begin position="169"/>
        <end position="189"/>
    </location>
</feature>
<feature type="transmembrane region" description="Helical" evidence="1">
    <location>
        <begin position="235"/>
        <end position="255"/>
    </location>
</feature>
<feature type="transmembrane region" description="Helical" evidence="1">
    <location>
        <begin position="264"/>
        <end position="284"/>
    </location>
</feature>
<evidence type="ECO:0000255" key="1"/>
<evidence type="ECO:0000305" key="2"/>
<protein>
    <recommendedName>
        <fullName>Serpentine receptor class epsilon-8</fullName>
        <shortName>Protein sre-8</shortName>
    </recommendedName>
</protein>
<dbReference type="EMBL" id="Z77661">
    <property type="protein sequence ID" value="CAB01186.1"/>
    <property type="molecule type" value="Genomic_DNA"/>
</dbReference>
<dbReference type="PIR" id="T22057">
    <property type="entry name" value="T22057"/>
</dbReference>
<dbReference type="RefSeq" id="NP_506528.1">
    <property type="nucleotide sequence ID" value="NM_074127.3"/>
</dbReference>
<dbReference type="SMR" id="Q20249"/>
<dbReference type="FunCoup" id="Q20249">
    <property type="interactions" value="387"/>
</dbReference>
<dbReference type="STRING" id="6239.F40G12.1.1"/>
<dbReference type="PaxDb" id="6239-F40G12.1"/>
<dbReference type="EnsemblMetazoa" id="F40G12.1.1">
    <property type="protein sequence ID" value="F40G12.1.1"/>
    <property type="gene ID" value="WBGene00009596"/>
</dbReference>
<dbReference type="GeneID" id="185561"/>
<dbReference type="KEGG" id="cel:CELE_F40G12.1"/>
<dbReference type="UCSC" id="F40G12.1">
    <property type="organism name" value="c. elegans"/>
</dbReference>
<dbReference type="AGR" id="WB:WBGene00009596"/>
<dbReference type="CTD" id="185561"/>
<dbReference type="WormBase" id="F40G12.1">
    <property type="protein sequence ID" value="CE10176"/>
    <property type="gene ID" value="WBGene00009596"/>
    <property type="gene designation" value="sre-8"/>
</dbReference>
<dbReference type="eggNOG" id="ENOG502TCXE">
    <property type="taxonomic scope" value="Eukaryota"/>
</dbReference>
<dbReference type="GeneTree" id="ENSGT00970000196776"/>
<dbReference type="HOGENOM" id="CLU_043866_1_1_1"/>
<dbReference type="InParanoid" id="Q20249"/>
<dbReference type="OMA" id="YSALPEW"/>
<dbReference type="OrthoDB" id="5819751at2759"/>
<dbReference type="PhylomeDB" id="Q20249"/>
<dbReference type="PRO" id="PR:Q20249"/>
<dbReference type="Proteomes" id="UP000001940">
    <property type="component" value="Chromosome V"/>
</dbReference>
<dbReference type="GO" id="GO:0016020">
    <property type="term" value="C:membrane"/>
    <property type="evidence" value="ECO:0007669"/>
    <property type="project" value="UniProtKB-SubCell"/>
</dbReference>
<dbReference type="GO" id="GO:0007606">
    <property type="term" value="P:sensory perception of chemical stimulus"/>
    <property type="evidence" value="ECO:0007669"/>
    <property type="project" value="InterPro"/>
</dbReference>
<dbReference type="InterPro" id="IPR004151">
    <property type="entry name" value="7TM_GPCR_serpentine_rcpt_Sre"/>
</dbReference>
<dbReference type="InterPro" id="IPR052854">
    <property type="entry name" value="Serpentine_rcpt_epsilon"/>
</dbReference>
<dbReference type="PANTHER" id="PTHR47518">
    <property type="entry name" value="SERPENTINE RECEPTOR CLASS EPSILON-13-RELATED"/>
    <property type="match status" value="1"/>
</dbReference>
<dbReference type="PANTHER" id="PTHR47518:SF11">
    <property type="entry name" value="SERPENTINE RECEPTOR, CLASS E (EPSILON)-RELATED"/>
    <property type="match status" value="1"/>
</dbReference>
<dbReference type="Pfam" id="PF03125">
    <property type="entry name" value="Sre"/>
    <property type="match status" value="1"/>
</dbReference>
<reference key="1">
    <citation type="journal article" date="1998" name="Science">
        <title>Genome sequence of the nematode C. elegans: a platform for investigating biology.</title>
        <authorList>
            <consortium name="The C. elegans sequencing consortium"/>
        </authorList>
    </citation>
    <scope>NUCLEOTIDE SEQUENCE [LARGE SCALE GENOMIC DNA]</scope>
    <source>
        <strain>Bristol N2</strain>
    </source>
</reference>
<comment type="subcellular location">
    <subcellularLocation>
        <location evidence="2">Membrane</location>
        <topology evidence="2">Multi-pass membrane protein</topology>
    </subcellularLocation>
</comment>
<comment type="similarity">
    <text evidence="2">Belongs to the nematode receptor-like protein sre family.</text>
</comment>
<name>SRE8_CAEEL</name>
<keyword id="KW-0472">Membrane</keyword>
<keyword id="KW-1185">Reference proteome</keyword>
<keyword id="KW-0812">Transmembrane</keyword>
<keyword id="KW-1133">Transmembrane helix</keyword>